<reference key="1">
    <citation type="journal article" date="1997" name="Nature">
        <title>The complete genome sequence of the hyperthermophilic, sulphate-reducing archaeon Archaeoglobus fulgidus.</title>
        <authorList>
            <person name="Klenk H.-P."/>
            <person name="Clayton R.A."/>
            <person name="Tomb J.-F."/>
            <person name="White O."/>
            <person name="Nelson K.E."/>
            <person name="Ketchum K.A."/>
            <person name="Dodson R.J."/>
            <person name="Gwinn M.L."/>
            <person name="Hickey E.K."/>
            <person name="Peterson J.D."/>
            <person name="Richardson D.L."/>
            <person name="Kerlavage A.R."/>
            <person name="Graham D.E."/>
            <person name="Kyrpides N.C."/>
            <person name="Fleischmann R.D."/>
            <person name="Quackenbush J."/>
            <person name="Lee N.H."/>
            <person name="Sutton G.G."/>
            <person name="Gill S.R."/>
            <person name="Kirkness E.F."/>
            <person name="Dougherty B.A."/>
            <person name="McKenney K."/>
            <person name="Adams M.D."/>
            <person name="Loftus B.J."/>
            <person name="Peterson S.N."/>
            <person name="Reich C.I."/>
            <person name="McNeil L.K."/>
            <person name="Badger J.H."/>
            <person name="Glodek A."/>
            <person name="Zhou L."/>
            <person name="Overbeek R."/>
            <person name="Gocayne J.D."/>
            <person name="Weidman J.F."/>
            <person name="McDonald L.A."/>
            <person name="Utterback T.R."/>
            <person name="Cotton M.D."/>
            <person name="Spriggs T."/>
            <person name="Artiach P."/>
            <person name="Kaine B.P."/>
            <person name="Sykes S.M."/>
            <person name="Sadow P.W."/>
            <person name="D'Andrea K.P."/>
            <person name="Bowman C."/>
            <person name="Fujii C."/>
            <person name="Garland S.A."/>
            <person name="Mason T.M."/>
            <person name="Olsen G.J."/>
            <person name="Fraser C.M."/>
            <person name="Smith H.O."/>
            <person name="Woese C.R."/>
            <person name="Venter J.C."/>
        </authorList>
    </citation>
    <scope>NUCLEOTIDE SEQUENCE [LARGE SCALE GENOMIC DNA]</scope>
    <source>
        <strain>ATCC 49558 / DSM 4304 / JCM 9628 / NBRC 100126 / VC-16</strain>
    </source>
</reference>
<proteinExistence type="inferred from homology"/>
<keyword id="KW-0974">Archaeal flagellum</keyword>
<keyword id="KW-1185">Reference proteome</keyword>
<name>FLAB2_ARCFU</name>
<dbReference type="EMBL" id="AE000782">
    <property type="protein sequence ID" value="AAB90185.1"/>
    <property type="molecule type" value="Genomic_DNA"/>
</dbReference>
<dbReference type="PIR" id="G69381">
    <property type="entry name" value="G69381"/>
</dbReference>
<dbReference type="RefSeq" id="WP_010878555.1">
    <property type="nucleotide sequence ID" value="NC_000917.1"/>
</dbReference>
<dbReference type="SMR" id="O29207"/>
<dbReference type="STRING" id="224325.AF_1055"/>
<dbReference type="PaxDb" id="224325-AF_1055"/>
<dbReference type="DNASU" id="1484278"/>
<dbReference type="EnsemblBacteria" id="AAB90185">
    <property type="protein sequence ID" value="AAB90185"/>
    <property type="gene ID" value="AF_1055"/>
</dbReference>
<dbReference type="GeneID" id="1484278"/>
<dbReference type="KEGG" id="afu:AF_1055"/>
<dbReference type="eggNOG" id="arCOG01829">
    <property type="taxonomic scope" value="Archaea"/>
</dbReference>
<dbReference type="HOGENOM" id="CLU_084671_1_0_2"/>
<dbReference type="OrthoDB" id="50520at2157"/>
<dbReference type="PhylomeDB" id="O29207"/>
<dbReference type="Proteomes" id="UP000002199">
    <property type="component" value="Chromosome"/>
</dbReference>
<dbReference type="GO" id="GO:0097589">
    <property type="term" value="C:archaeal-type flagellum"/>
    <property type="evidence" value="ECO:0007669"/>
    <property type="project" value="UniProtKB-SubCell"/>
</dbReference>
<dbReference type="GO" id="GO:0005198">
    <property type="term" value="F:structural molecule activity"/>
    <property type="evidence" value="ECO:0007669"/>
    <property type="project" value="InterPro"/>
</dbReference>
<dbReference type="GO" id="GO:0097588">
    <property type="term" value="P:archaeal or bacterial-type flagellum-dependent cell motility"/>
    <property type="evidence" value="ECO:0007669"/>
    <property type="project" value="InterPro"/>
</dbReference>
<dbReference type="InterPro" id="IPR013373">
    <property type="entry name" value="Flagellin/pilin_N_arc"/>
</dbReference>
<dbReference type="InterPro" id="IPR002774">
    <property type="entry name" value="Flagellin_arc"/>
</dbReference>
<dbReference type="NCBIfam" id="TIGR02537">
    <property type="entry name" value="arch_flag_Nterm"/>
    <property type="match status" value="1"/>
</dbReference>
<dbReference type="PANTHER" id="PTHR35903">
    <property type="entry name" value="FLAGELLIN B1"/>
    <property type="match status" value="1"/>
</dbReference>
<dbReference type="PANTHER" id="PTHR35903:SF1">
    <property type="entry name" value="FLAGELLIN B1"/>
    <property type="match status" value="1"/>
</dbReference>
<dbReference type="Pfam" id="PF01917">
    <property type="entry name" value="Arch_flagellin"/>
    <property type="match status" value="1"/>
</dbReference>
<gene>
    <name type="primary">flaB2</name>
    <name type="ordered locus">AF_1055</name>
</gene>
<organism>
    <name type="scientific">Archaeoglobus fulgidus (strain ATCC 49558 / DSM 4304 / JCM 9628 / NBRC 100126 / VC-16)</name>
    <dbReference type="NCBI Taxonomy" id="224325"/>
    <lineage>
        <taxon>Archaea</taxon>
        <taxon>Methanobacteriati</taxon>
        <taxon>Methanobacteriota</taxon>
        <taxon>Archaeoglobi</taxon>
        <taxon>Archaeoglobales</taxon>
        <taxon>Archaeoglobaceae</taxon>
        <taxon>Archaeoglobus</taxon>
    </lineage>
</organism>
<accession>O29207</accession>
<sequence length="207" mass="22307">MRVGSRKLRRDEKGFTGLEAAIVLIAFVVVAAVFSYVMLGAGFYTTQKSKKVVDTGVKQASSSLTLDGQYIYLNCTSAANGQTGSSGKVGQVYFYVTQTAGGSPVDLNMTSIAITTDTGFKQLFFNDSCTPGTDCPWWYDDTVGDGDNVVEPNEKYKITIDVNNTEWSGIGELNPNDVVTIEVRPPIGAPLTITKTLPPSFTNLTFV</sequence>
<evidence type="ECO:0000255" key="1"/>
<evidence type="ECO:0000305" key="2"/>
<comment type="function">
    <text>Flagellin is the subunit protein which polymerizes to form the filaments of archaeal flagella.</text>
</comment>
<comment type="subcellular location">
    <subcellularLocation>
        <location>Archaeal flagellum</location>
    </subcellularLocation>
</comment>
<comment type="similarity">
    <text evidence="2">Belongs to the archaeal flagellin family.</text>
</comment>
<feature type="propeptide" id="PRO_0000009361" evidence="1">
    <location>
        <begin position="1"/>
        <end position="14"/>
    </location>
</feature>
<feature type="chain" id="PRO_0000009362" description="Probable flagellin 2">
    <location>
        <begin position="15"/>
        <end position="207"/>
    </location>
</feature>
<protein>
    <recommendedName>
        <fullName>Probable flagellin 2</fullName>
    </recommendedName>
</protein>